<gene>
    <name type="ordered locus">Mhun_2939</name>
</gene>
<feature type="chain" id="PRO_1000024290" description="Phosphoglycolate phosphatase">
    <location>
        <begin position="1"/>
        <end position="232"/>
    </location>
</feature>
<feature type="active site" description="Nucleophile" evidence="1">
    <location>
        <position position="8"/>
    </location>
</feature>
<feature type="binding site" evidence="1">
    <location>
        <position position="8"/>
    </location>
    <ligand>
        <name>Mg(2+)</name>
        <dbReference type="ChEBI" id="CHEBI:18420"/>
    </ligand>
</feature>
<feature type="binding site" evidence="1">
    <location>
        <position position="10"/>
    </location>
    <ligand>
        <name>Mg(2+)</name>
        <dbReference type="ChEBI" id="CHEBI:18420"/>
    </ligand>
</feature>
<feature type="binding site" evidence="1">
    <location>
        <position position="155"/>
    </location>
    <ligand>
        <name>substrate</name>
    </ligand>
</feature>
<feature type="binding site" evidence="1">
    <location>
        <position position="178"/>
    </location>
    <ligand>
        <name>Mg(2+)</name>
        <dbReference type="ChEBI" id="CHEBI:18420"/>
    </ligand>
</feature>
<feature type="binding site" evidence="1">
    <location>
        <position position="182"/>
    </location>
    <ligand>
        <name>Mg(2+)</name>
        <dbReference type="ChEBI" id="CHEBI:18420"/>
    </ligand>
</feature>
<proteinExistence type="inferred from homology"/>
<evidence type="ECO:0000255" key="1">
    <source>
        <dbReference type="HAMAP-Rule" id="MF_01419"/>
    </source>
</evidence>
<reference key="1">
    <citation type="journal article" date="2016" name="Stand. Genomic Sci.">
        <title>Complete genome sequence of Methanospirillum hungatei type strain JF1.</title>
        <authorList>
            <person name="Gunsalus R.P."/>
            <person name="Cook L.E."/>
            <person name="Crable B."/>
            <person name="Rohlin L."/>
            <person name="McDonald E."/>
            <person name="Mouttaki H."/>
            <person name="Sieber J.R."/>
            <person name="Poweleit N."/>
            <person name="Zhou H."/>
            <person name="Lapidus A.L."/>
            <person name="Daligault H.E."/>
            <person name="Land M."/>
            <person name="Gilna P."/>
            <person name="Ivanova N."/>
            <person name="Kyrpides N."/>
            <person name="Culley D.E."/>
            <person name="McInerney M.J."/>
        </authorList>
    </citation>
    <scope>NUCLEOTIDE SEQUENCE [LARGE SCALE GENOMIC DNA]</scope>
    <source>
        <strain>ATCC 27890 / DSM 864 / NBRC 100397 / JF-1</strain>
    </source>
</reference>
<keyword id="KW-0119">Carbohydrate metabolism</keyword>
<keyword id="KW-0378">Hydrolase</keyword>
<keyword id="KW-0460">Magnesium</keyword>
<keyword id="KW-0479">Metal-binding</keyword>
<keyword id="KW-1185">Reference proteome</keyword>
<protein>
    <recommendedName>
        <fullName evidence="1">Phosphoglycolate phosphatase</fullName>
        <shortName evidence="1">PGP</shortName>
        <shortName evidence="1">PGPase</shortName>
        <ecNumber evidence="1">3.1.3.18</ecNumber>
    </recommendedName>
</protein>
<dbReference type="EC" id="3.1.3.18" evidence="1"/>
<dbReference type="EMBL" id="CP000254">
    <property type="protein sequence ID" value="ABD42631.1"/>
    <property type="molecule type" value="Genomic_DNA"/>
</dbReference>
<dbReference type="RefSeq" id="WP_011449884.1">
    <property type="nucleotide sequence ID" value="NC_007796.1"/>
</dbReference>
<dbReference type="SMR" id="Q2FU45"/>
<dbReference type="STRING" id="323259.Mhun_2939"/>
<dbReference type="EnsemblBacteria" id="ABD42631">
    <property type="protein sequence ID" value="ABD42631"/>
    <property type="gene ID" value="Mhun_2939"/>
</dbReference>
<dbReference type="GeneID" id="3925106"/>
<dbReference type="KEGG" id="mhu:Mhun_2939"/>
<dbReference type="eggNOG" id="arCOG01213">
    <property type="taxonomic scope" value="Archaea"/>
</dbReference>
<dbReference type="HOGENOM" id="CLU_044146_2_0_2"/>
<dbReference type="InParanoid" id="Q2FU45"/>
<dbReference type="OrthoDB" id="120822at2157"/>
<dbReference type="Proteomes" id="UP000001941">
    <property type="component" value="Chromosome"/>
</dbReference>
<dbReference type="GO" id="GO:0005829">
    <property type="term" value="C:cytosol"/>
    <property type="evidence" value="ECO:0007669"/>
    <property type="project" value="TreeGrafter"/>
</dbReference>
<dbReference type="GO" id="GO:0000287">
    <property type="term" value="F:magnesium ion binding"/>
    <property type="evidence" value="ECO:0007669"/>
    <property type="project" value="InterPro"/>
</dbReference>
<dbReference type="GO" id="GO:0008967">
    <property type="term" value="F:phosphoglycolate phosphatase activity"/>
    <property type="evidence" value="ECO:0007669"/>
    <property type="project" value="UniProtKB-UniRule"/>
</dbReference>
<dbReference type="CDD" id="cd07514">
    <property type="entry name" value="HAD_Pase"/>
    <property type="match status" value="1"/>
</dbReference>
<dbReference type="Gene3D" id="3.90.1070.10">
    <property type="match status" value="1"/>
</dbReference>
<dbReference type="Gene3D" id="3.40.50.1000">
    <property type="entry name" value="HAD superfamily/HAD-like"/>
    <property type="match status" value="1"/>
</dbReference>
<dbReference type="HAMAP" id="MF_01419">
    <property type="entry name" value="GPH_hydrolase_arch"/>
    <property type="match status" value="1"/>
</dbReference>
<dbReference type="InterPro" id="IPR036412">
    <property type="entry name" value="HAD-like_sf"/>
</dbReference>
<dbReference type="InterPro" id="IPR023214">
    <property type="entry name" value="HAD_sf"/>
</dbReference>
<dbReference type="InterPro" id="IPR006382">
    <property type="entry name" value="PGPase"/>
</dbReference>
<dbReference type="NCBIfam" id="TIGR01487">
    <property type="entry name" value="Pglycolate_arch"/>
    <property type="match status" value="1"/>
</dbReference>
<dbReference type="NCBIfam" id="NF002245">
    <property type="entry name" value="PRK01158.1"/>
    <property type="match status" value="1"/>
</dbReference>
<dbReference type="NCBIfam" id="TIGR01482">
    <property type="entry name" value="SPP-subfamily"/>
    <property type="match status" value="1"/>
</dbReference>
<dbReference type="PANTHER" id="PTHR10000:SF8">
    <property type="entry name" value="HAD SUPERFAMILY HYDROLASE-LIKE, TYPE 3"/>
    <property type="match status" value="1"/>
</dbReference>
<dbReference type="PANTHER" id="PTHR10000">
    <property type="entry name" value="PHOSPHOSERINE PHOSPHATASE"/>
    <property type="match status" value="1"/>
</dbReference>
<dbReference type="Pfam" id="PF08282">
    <property type="entry name" value="Hydrolase_3"/>
    <property type="match status" value="2"/>
</dbReference>
<dbReference type="SFLD" id="SFLDG01140">
    <property type="entry name" value="C2.B:_Phosphomannomutase_and_P"/>
    <property type="match status" value="1"/>
</dbReference>
<dbReference type="SFLD" id="SFLDF00446">
    <property type="entry name" value="phosphoglycolate_phosphatase_3"/>
    <property type="match status" value="1"/>
</dbReference>
<dbReference type="SUPFAM" id="SSF56784">
    <property type="entry name" value="HAD-like"/>
    <property type="match status" value="1"/>
</dbReference>
<name>PGP_METHJ</name>
<comment type="function">
    <text evidence="1">Catalyzes the dephosphorylation of 2-phosphoglycolate.</text>
</comment>
<comment type="catalytic activity">
    <reaction evidence="1">
        <text>2-phosphoglycolate + H2O = glycolate + phosphate</text>
        <dbReference type="Rhea" id="RHEA:14369"/>
        <dbReference type="ChEBI" id="CHEBI:15377"/>
        <dbReference type="ChEBI" id="CHEBI:29805"/>
        <dbReference type="ChEBI" id="CHEBI:43474"/>
        <dbReference type="ChEBI" id="CHEBI:58033"/>
        <dbReference type="EC" id="3.1.3.18"/>
    </reaction>
</comment>
<comment type="cofactor">
    <cofactor evidence="1">
        <name>Mg(2+)</name>
        <dbReference type="ChEBI" id="CHEBI:18420"/>
    </cofactor>
</comment>
<comment type="similarity">
    <text evidence="1">Belongs to the archaeal SPP-like hydrolase family.</text>
</comment>
<accession>Q2FU45</accession>
<sequence>MLRGVITDIDGTLTDEKRRLSTAAIETIRKLQEGGIEVVLSSGNTSCLLKGLCKLIGTGGTFIGENGGVYRIGFQGSMQVMANRDIAVKALNLLEEYYGKKGIRLELYSHQERYSDIAFAREVPVEEVRSLLSGWPVDIMDTNFAIHIHEAGIDKGRTFHIVAEQLGIKPDEFLGIGDSENDIGMIKAAGTGCCVANAQEDVRNISDYCSSVPYGEGFVEIMRMYFPHILAR</sequence>
<organism>
    <name type="scientific">Methanospirillum hungatei JF-1 (strain ATCC 27890 / DSM 864 / NBRC 100397 / JF-1)</name>
    <dbReference type="NCBI Taxonomy" id="323259"/>
    <lineage>
        <taxon>Archaea</taxon>
        <taxon>Methanobacteriati</taxon>
        <taxon>Methanobacteriota</taxon>
        <taxon>Stenosarchaea group</taxon>
        <taxon>Methanomicrobia</taxon>
        <taxon>Methanomicrobiales</taxon>
        <taxon>Methanospirillaceae</taxon>
        <taxon>Methanospirillum</taxon>
    </lineage>
</organism>